<keyword id="KW-0002">3D-structure</keyword>
<keyword id="KW-0963">Cytoplasm</keyword>
<keyword id="KW-0378">Hydrolase</keyword>
<keyword id="KW-0479">Metal-binding</keyword>
<keyword id="KW-0539">Nucleus</keyword>
<keyword id="KW-1185">Reference proteome</keyword>
<keyword id="KW-0862">Zinc</keyword>
<name>FCY1_YEAST</name>
<proteinExistence type="evidence at protein level"/>
<accession>Q12178</accession>
<accession>D6W467</accession>
<protein>
    <recommendedName>
        <fullName evidence="10">Cytosine deaminase</fullName>
        <shortName>yCD</shortName>
        <ecNumber evidence="9">3.5.4.1</ecNumber>
    </recommendedName>
    <alternativeName>
        <fullName>Cytosine aminohydrolase</fullName>
    </alternativeName>
    <alternativeName>
        <fullName evidence="10">Fluorocytosine resistance protein 1</fullName>
    </alternativeName>
</protein>
<feature type="chain" id="PRO_0000171702" description="Cytosine deaminase">
    <location>
        <begin position="1"/>
        <end position="158"/>
    </location>
</feature>
<feature type="domain" description="CMP/dCMP-type deaminase" evidence="1">
    <location>
        <begin position="9"/>
        <end position="129"/>
    </location>
</feature>
<feature type="active site" description="Proton donor" evidence="3 17">
    <location>
        <position position="64"/>
    </location>
</feature>
<feature type="binding site" evidence="3 4 15 17">
    <location>
        <position position="51"/>
    </location>
    <ligand>
        <name>substrate</name>
    </ligand>
</feature>
<feature type="binding site" evidence="3 4 8 14 15 16 17 18 19">
    <location>
        <position position="62"/>
    </location>
    <ligand>
        <name>Zn(2+)</name>
        <dbReference type="ChEBI" id="CHEBI:29105"/>
        <note>catalytic</note>
    </ligand>
</feature>
<feature type="binding site" evidence="3 4 8 14 15 16 17 18 19">
    <location>
        <position position="91"/>
    </location>
    <ligand>
        <name>Zn(2+)</name>
        <dbReference type="ChEBI" id="CHEBI:29105"/>
        <note>catalytic</note>
    </ligand>
</feature>
<feature type="binding site" evidence="3 4 8 14 15 16 17 18 19">
    <location>
        <position position="94"/>
    </location>
    <ligand>
        <name>Zn(2+)</name>
        <dbReference type="ChEBI" id="CHEBI:29105"/>
        <note>catalytic</note>
    </ligand>
</feature>
<feature type="binding site" evidence="3 4 15 17">
    <location>
        <position position="155"/>
    </location>
    <ligand>
        <name>substrate</name>
    </ligand>
</feature>
<feature type="helix" evidence="21">
    <location>
        <begin position="7"/>
        <end position="10"/>
    </location>
</feature>
<feature type="helix" evidence="20">
    <location>
        <begin position="11"/>
        <end position="27"/>
    </location>
</feature>
<feature type="strand" evidence="20">
    <location>
        <begin position="34"/>
        <end position="39"/>
    </location>
</feature>
<feature type="turn" evidence="20">
    <location>
        <begin position="40"/>
        <end position="42"/>
    </location>
</feature>
<feature type="strand" evidence="20">
    <location>
        <begin position="45"/>
        <end position="50"/>
    </location>
</feature>
<feature type="helix" evidence="20">
    <location>
        <begin position="53"/>
        <end position="56"/>
    </location>
</feature>
<feature type="helix" evidence="20">
    <location>
        <begin position="63"/>
        <end position="71"/>
    </location>
</feature>
<feature type="helix" evidence="20">
    <location>
        <begin position="76"/>
        <end position="79"/>
    </location>
</feature>
<feature type="strand" evidence="20">
    <location>
        <begin position="82"/>
        <end position="88"/>
    </location>
</feature>
<feature type="helix" evidence="20">
    <location>
        <begin position="92"/>
        <end position="101"/>
    </location>
</feature>
<feature type="strand" evidence="20">
    <location>
        <begin position="105"/>
        <end position="113"/>
    </location>
</feature>
<feature type="helix" evidence="20">
    <location>
        <begin position="118"/>
        <end position="124"/>
    </location>
</feature>
<feature type="strand" evidence="20">
    <location>
        <begin position="128"/>
        <end position="131"/>
    </location>
</feature>
<feature type="helix" evidence="20">
    <location>
        <begin position="135"/>
        <end position="147"/>
    </location>
</feature>
<feature type="helix" evidence="20">
    <location>
        <begin position="149"/>
        <end position="155"/>
    </location>
</feature>
<evidence type="ECO:0000255" key="1">
    <source>
        <dbReference type="PROSITE-ProRule" id="PRU01083"/>
    </source>
</evidence>
<evidence type="ECO:0000269" key="2">
    <source>
    </source>
</evidence>
<evidence type="ECO:0000269" key="3">
    <source>
    </source>
</evidence>
<evidence type="ECO:0000269" key="4">
    <source>
    </source>
</evidence>
<evidence type="ECO:0000269" key="5">
    <source>
    </source>
</evidence>
<evidence type="ECO:0000269" key="6">
    <source>
    </source>
</evidence>
<evidence type="ECO:0000269" key="7">
    <source>
    </source>
</evidence>
<evidence type="ECO:0000269" key="8">
    <source>
    </source>
</evidence>
<evidence type="ECO:0000269" key="9">
    <source>
    </source>
</evidence>
<evidence type="ECO:0000303" key="10">
    <source>
    </source>
</evidence>
<evidence type="ECO:0000305" key="11"/>
<evidence type="ECO:0000305" key="12">
    <source>
    </source>
</evidence>
<evidence type="ECO:0000305" key="13">
    <source>
    </source>
</evidence>
<evidence type="ECO:0007744" key="14">
    <source>
        <dbReference type="PDB" id="1OX7"/>
    </source>
</evidence>
<evidence type="ECO:0007744" key="15">
    <source>
        <dbReference type="PDB" id="1P6O"/>
    </source>
</evidence>
<evidence type="ECO:0007744" key="16">
    <source>
        <dbReference type="PDB" id="1RB7"/>
    </source>
</evidence>
<evidence type="ECO:0007744" key="17">
    <source>
        <dbReference type="PDB" id="1UAQ"/>
    </source>
</evidence>
<evidence type="ECO:0007744" key="18">
    <source>
        <dbReference type="PDB" id="1YSB"/>
    </source>
</evidence>
<evidence type="ECO:0007744" key="19">
    <source>
        <dbReference type="PDB" id="1YSD"/>
    </source>
</evidence>
<evidence type="ECO:0007829" key="20">
    <source>
        <dbReference type="PDB" id="1P6O"/>
    </source>
</evidence>
<evidence type="ECO:0007829" key="21">
    <source>
        <dbReference type="PDB" id="8VLJ"/>
    </source>
</evidence>
<gene>
    <name evidence="10" type="primary">FCY1</name>
    <name type="ordered locus">YPR062W</name>
    <name type="ORF">YP9499.17</name>
</gene>
<organism>
    <name type="scientific">Saccharomyces cerevisiae (strain ATCC 204508 / S288c)</name>
    <name type="common">Baker's yeast</name>
    <dbReference type="NCBI Taxonomy" id="559292"/>
    <lineage>
        <taxon>Eukaryota</taxon>
        <taxon>Fungi</taxon>
        <taxon>Dikarya</taxon>
        <taxon>Ascomycota</taxon>
        <taxon>Saccharomycotina</taxon>
        <taxon>Saccharomycetes</taxon>
        <taxon>Saccharomycetales</taxon>
        <taxon>Saccharomycetaceae</taxon>
        <taxon>Saccharomyces</taxon>
    </lineage>
</organism>
<reference key="1">
    <citation type="journal article" date="1997" name="Curr. Genet.">
        <title>Characterization of the Saccharomyces cerevisiae FCY1 gene encoding cytosine deaminase and its homologue FCA1 of Candida albicans.</title>
        <authorList>
            <person name="Erbs P."/>
            <person name="Exinger F."/>
            <person name="Jund R."/>
        </authorList>
    </citation>
    <scope>NUCLEOTIDE SEQUENCE [GENOMIC DNA]</scope>
    <scope>FUNCTION</scope>
    <scope>CATALYTIC ACTIVITY</scope>
    <source>
        <strain>ATCC 28383 / FL100 / VTT C-80102</strain>
    </source>
</reference>
<reference key="2">
    <citation type="submission" date="1997-08" db="EMBL/GenBank/DDBJ databases">
        <title>Isolation of thermally stable cytosine deaminase from baker's yeast.</title>
        <authorList>
            <person name="Senter P.D."/>
            <person name="Su P.C.D."/>
            <person name="Marquardt H."/>
            <person name="Hayden M.S."/>
            <person name="Linsley P.S."/>
        </authorList>
    </citation>
    <scope>NUCLEOTIDE SEQUENCE [GENOMIC DNA]</scope>
    <source>
        <strain>334</strain>
    </source>
</reference>
<reference key="3">
    <citation type="journal article" date="1997" name="Nature">
        <title>The nucleotide sequence of Saccharomyces cerevisiae chromosome XVI.</title>
        <authorList>
            <person name="Bussey H."/>
            <person name="Storms R.K."/>
            <person name="Ahmed A."/>
            <person name="Albermann K."/>
            <person name="Allen E."/>
            <person name="Ansorge W."/>
            <person name="Araujo R."/>
            <person name="Aparicio A."/>
            <person name="Barrell B.G."/>
            <person name="Badcock K."/>
            <person name="Benes V."/>
            <person name="Botstein D."/>
            <person name="Bowman S."/>
            <person name="Brueckner M."/>
            <person name="Carpenter J."/>
            <person name="Cherry J.M."/>
            <person name="Chung E."/>
            <person name="Churcher C.M."/>
            <person name="Coster F."/>
            <person name="Davis K."/>
            <person name="Davis R.W."/>
            <person name="Dietrich F.S."/>
            <person name="Delius H."/>
            <person name="DiPaolo T."/>
            <person name="Dubois E."/>
            <person name="Duesterhoeft A."/>
            <person name="Duncan M."/>
            <person name="Floeth M."/>
            <person name="Fortin N."/>
            <person name="Friesen J.D."/>
            <person name="Fritz C."/>
            <person name="Goffeau A."/>
            <person name="Hall J."/>
            <person name="Hebling U."/>
            <person name="Heumann K."/>
            <person name="Hilbert H."/>
            <person name="Hillier L.W."/>
            <person name="Hunicke-Smith S."/>
            <person name="Hyman R.W."/>
            <person name="Johnston M."/>
            <person name="Kalman S."/>
            <person name="Kleine K."/>
            <person name="Komp C."/>
            <person name="Kurdi O."/>
            <person name="Lashkari D."/>
            <person name="Lew H."/>
            <person name="Lin A."/>
            <person name="Lin D."/>
            <person name="Louis E.J."/>
            <person name="Marathe R."/>
            <person name="Messenguy F."/>
            <person name="Mewes H.-W."/>
            <person name="Mirtipati S."/>
            <person name="Moestl D."/>
            <person name="Mueller-Auer S."/>
            <person name="Namath A."/>
            <person name="Nentwich U."/>
            <person name="Oefner P."/>
            <person name="Pearson D."/>
            <person name="Petel F.X."/>
            <person name="Pohl T.M."/>
            <person name="Purnelle B."/>
            <person name="Rajandream M.A."/>
            <person name="Rechmann S."/>
            <person name="Rieger M."/>
            <person name="Riles L."/>
            <person name="Roberts D."/>
            <person name="Schaefer M."/>
            <person name="Scharfe M."/>
            <person name="Scherens B."/>
            <person name="Schramm S."/>
            <person name="Schroeder M."/>
            <person name="Sdicu A.-M."/>
            <person name="Tettelin H."/>
            <person name="Urrestarazu L.A."/>
            <person name="Ushinsky S."/>
            <person name="Vierendeels F."/>
            <person name="Vissers S."/>
            <person name="Voss H."/>
            <person name="Walsh S.V."/>
            <person name="Wambutt R."/>
            <person name="Wang Y."/>
            <person name="Wedler E."/>
            <person name="Wedler H."/>
            <person name="Winnett E."/>
            <person name="Zhong W.-W."/>
            <person name="Zollner A."/>
            <person name="Vo D.H."/>
            <person name="Hani J."/>
        </authorList>
    </citation>
    <scope>NUCLEOTIDE SEQUENCE [LARGE SCALE GENOMIC DNA]</scope>
    <source>
        <strain>ATCC 204508 / S288c</strain>
    </source>
</reference>
<reference key="4">
    <citation type="journal article" date="2014" name="G3 (Bethesda)">
        <title>The reference genome sequence of Saccharomyces cerevisiae: Then and now.</title>
        <authorList>
            <person name="Engel S.R."/>
            <person name="Dietrich F.S."/>
            <person name="Fisk D.G."/>
            <person name="Binkley G."/>
            <person name="Balakrishnan R."/>
            <person name="Costanzo M.C."/>
            <person name="Dwight S.S."/>
            <person name="Hitz B.C."/>
            <person name="Karra K."/>
            <person name="Nash R.S."/>
            <person name="Weng S."/>
            <person name="Wong E.D."/>
            <person name="Lloyd P."/>
            <person name="Skrzypek M.S."/>
            <person name="Miyasato S.R."/>
            <person name="Simison M."/>
            <person name="Cherry J.M."/>
        </authorList>
    </citation>
    <scope>GENOME REANNOTATION</scope>
    <source>
        <strain>ATCC 204508 / S288c</strain>
    </source>
</reference>
<reference key="5">
    <citation type="journal article" date="1999" name="Curr. Genet.">
        <title>New insights into the pyrimidine salvage pathway of Saccharomyces cerevisiae: requirement of six genes for cytidine metabolism.</title>
        <authorList>
            <person name="Kurtz J.-E."/>
            <person name="Exinger F."/>
            <person name="Erbs P."/>
            <person name="Jund R."/>
        </authorList>
    </citation>
    <scope>FUNCTION</scope>
    <scope>PATHWAY</scope>
</reference>
<reference key="6">
    <citation type="journal article" date="2003" name="Nature">
        <title>Global analysis of protein localization in budding yeast.</title>
        <authorList>
            <person name="Huh W.-K."/>
            <person name="Falvo J.V."/>
            <person name="Gerke L.C."/>
            <person name="Carroll A.S."/>
            <person name="Howson R.W."/>
            <person name="Weissman J.S."/>
            <person name="O'Shea E.K."/>
        </authorList>
    </citation>
    <scope>SUBCELLULAR LOCATION [LARGE SCALE ANALYSIS]</scope>
</reference>
<reference key="7">
    <citation type="journal article" date="2003" name="Nature">
        <title>Global analysis of protein expression in yeast.</title>
        <authorList>
            <person name="Ghaemmaghami S."/>
            <person name="Huh W.-K."/>
            <person name="Bower K."/>
            <person name="Howson R.W."/>
            <person name="Belle A."/>
            <person name="Dephoure N."/>
            <person name="O'Shea E.K."/>
            <person name="Weissman J.S."/>
        </authorList>
    </citation>
    <scope>LEVEL OF PROTEIN EXPRESSION [LARGE SCALE ANALYSIS]</scope>
</reference>
<reference key="8">
    <citation type="journal article" date="2004" name="J. Am. Chem. Soc.">
        <title>Catalytic mechanism of yeast cytosine deaminase: an ONIOM computational study.</title>
        <authorList>
            <person name="Sklenak S."/>
            <person name="Yao L."/>
            <person name="Cukier R.I."/>
            <person name="Yan H."/>
        </authorList>
    </citation>
    <scope>FUNCTION</scope>
</reference>
<reference key="9">
    <citation type="journal article" date="2005" name="Biochemistry">
        <title>Product release is rate-limiting in the activation of the prodrug 5-fluorocytosine by yeast cytosine deaminase.</title>
        <authorList>
            <person name="Yao L."/>
            <person name="Li Y."/>
            <person name="Wu Y."/>
            <person name="Liu A."/>
            <person name="Yan H."/>
        </authorList>
    </citation>
    <scope>CATALYTIC ACTIVITY</scope>
    <scope>BIOPHYSICOCHEMICAL PROPERTIES</scope>
    <scope>BIOTECHNOLOGY</scope>
</reference>
<reference key="10">
    <citation type="journal article" date="2003" name="J. Biol. Chem.">
        <title>Crystal structure of yeast cytosine deaminase. Insights into enzyme mechanism and evolution.</title>
        <authorList>
            <person name="Ko T.-P."/>
            <person name="Lin J.-J."/>
            <person name="Hu C.-Y."/>
            <person name="Hsu Y.-H."/>
            <person name="Wang A.H.-J."/>
            <person name="Liaw S.-H."/>
        </authorList>
    </citation>
    <scope>X-RAY CRYSTALLOGRAPHY (1.6 ANGSTROMS) IN COMPLEX WITH SUBSTRATE ANALOG AND ZINC IONS</scope>
    <scope>ACTIVE SITE</scope>
</reference>
<reference key="11">
    <citation type="journal article" date="2003" name="Structure">
        <title>The 1.14 A crystal structure of yeast cytosine deaminase: evolution of nucleotide salvage enzymes and implications for genetic chemotherapy.</title>
        <authorList>
            <person name="Ireton G.C."/>
            <person name="Black M.E."/>
            <person name="Stoddard B.L."/>
        </authorList>
    </citation>
    <scope>X-RAY CRYSTALLOGRAPHY (1.14 ANGSTROMS) IN COMPLEX WITH SUBSTRATE ANALOG AND ZINC IONS</scope>
    <scope>SUBUNIT</scope>
</reference>
<reference key="12">
    <citation type="journal article" date="2005" name="Science">
        <title>Computational thermostabilization of an enzyme.</title>
        <authorList>
            <person name="Korkegian A."/>
            <person name="Black M.E."/>
            <person name="Baker D."/>
            <person name="Stoddard B.L."/>
        </authorList>
    </citation>
    <scope>X-RAY CRYSTALLOGRAPHY (1.70 ANGSTROMS) IN COMPLEX WITH ZINC IONS</scope>
</reference>
<dbReference type="EC" id="3.5.4.1" evidence="9"/>
<dbReference type="EMBL" id="U55193">
    <property type="protein sequence ID" value="AAC13409.1"/>
    <property type="molecule type" value="Genomic_DNA"/>
</dbReference>
<dbReference type="EMBL" id="AF005261">
    <property type="protein sequence ID" value="AAB67713.1"/>
    <property type="molecule type" value="Genomic_DNA"/>
</dbReference>
<dbReference type="EMBL" id="Z71255">
    <property type="protein sequence ID" value="CAA95006.1"/>
    <property type="molecule type" value="Genomic_DNA"/>
</dbReference>
<dbReference type="EMBL" id="Z49219">
    <property type="protein sequence ID" value="CAA89179.1"/>
    <property type="molecule type" value="Genomic_DNA"/>
</dbReference>
<dbReference type="EMBL" id="BK006949">
    <property type="protein sequence ID" value="DAA11483.1"/>
    <property type="molecule type" value="Genomic_DNA"/>
</dbReference>
<dbReference type="PIR" id="S54083">
    <property type="entry name" value="S54083"/>
</dbReference>
<dbReference type="RefSeq" id="NP_015387.1">
    <property type="nucleotide sequence ID" value="NM_001184159.1"/>
</dbReference>
<dbReference type="PDB" id="1OX7">
    <property type="method" value="X-ray"/>
    <property type="resolution" value="1.43 A"/>
    <property type="chains" value="A/B=1-158"/>
</dbReference>
<dbReference type="PDB" id="1P6O">
    <property type="method" value="X-ray"/>
    <property type="resolution" value="1.14 A"/>
    <property type="chains" value="A/B=1-158"/>
</dbReference>
<dbReference type="PDB" id="1RB7">
    <property type="method" value="X-ray"/>
    <property type="resolution" value="2.10 A"/>
    <property type="chains" value="A/B=1-158"/>
</dbReference>
<dbReference type="PDB" id="1UAQ">
    <property type="method" value="X-ray"/>
    <property type="resolution" value="1.60 A"/>
    <property type="chains" value="A/B=1-158"/>
</dbReference>
<dbReference type="PDB" id="1YSB">
    <property type="method" value="X-ray"/>
    <property type="resolution" value="1.70 A"/>
    <property type="chains" value="A/B=1-158"/>
</dbReference>
<dbReference type="PDB" id="1YSD">
    <property type="method" value="X-ray"/>
    <property type="resolution" value="1.90 A"/>
    <property type="chains" value="A/B=1-158"/>
</dbReference>
<dbReference type="PDB" id="2O3K">
    <property type="method" value="X-ray"/>
    <property type="resolution" value="2.30 A"/>
    <property type="chains" value="A/B=1-158"/>
</dbReference>
<dbReference type="PDB" id="8I3N">
    <property type="method" value="X-ray"/>
    <property type="resolution" value="1.73 A"/>
    <property type="chains" value="A/B/C/D=1-158"/>
</dbReference>
<dbReference type="PDB" id="8I3O">
    <property type="method" value="X-ray"/>
    <property type="resolution" value="2.00 A"/>
    <property type="chains" value="A/B/C/D=1-158"/>
</dbReference>
<dbReference type="PDB" id="8I3P">
    <property type="method" value="X-ray"/>
    <property type="resolution" value="1.30 A"/>
    <property type="chains" value="A/B=1-158"/>
</dbReference>
<dbReference type="PDB" id="8VLJ">
    <property type="method" value="X-ray"/>
    <property type="resolution" value="1.39 A"/>
    <property type="chains" value="A/B=1-158"/>
</dbReference>
<dbReference type="PDB" id="8VLK">
    <property type="method" value="X-ray"/>
    <property type="resolution" value="1.76 A"/>
    <property type="chains" value="A/B/C/D=1-158"/>
</dbReference>
<dbReference type="PDB" id="8VLL">
    <property type="method" value="X-ray"/>
    <property type="resolution" value="1.67 A"/>
    <property type="chains" value="A/B=1-158"/>
</dbReference>
<dbReference type="PDB" id="8VLM">
    <property type="method" value="X-ray"/>
    <property type="resolution" value="2.67 A"/>
    <property type="chains" value="A/B/C/D=1-158"/>
</dbReference>
<dbReference type="PDBsum" id="1OX7"/>
<dbReference type="PDBsum" id="1P6O"/>
<dbReference type="PDBsum" id="1RB7"/>
<dbReference type="PDBsum" id="1UAQ"/>
<dbReference type="PDBsum" id="1YSB"/>
<dbReference type="PDBsum" id="1YSD"/>
<dbReference type="PDBsum" id="2O3K"/>
<dbReference type="PDBsum" id="8I3N"/>
<dbReference type="PDBsum" id="8I3O"/>
<dbReference type="PDBsum" id="8I3P"/>
<dbReference type="PDBsum" id="8VLJ"/>
<dbReference type="PDBsum" id="8VLK"/>
<dbReference type="PDBsum" id="8VLL"/>
<dbReference type="PDBsum" id="8VLM"/>
<dbReference type="SMR" id="Q12178"/>
<dbReference type="BioGRID" id="36235">
    <property type="interactions" value="65"/>
</dbReference>
<dbReference type="DIP" id="DIP-1662N"/>
<dbReference type="FunCoup" id="Q12178">
    <property type="interactions" value="200"/>
</dbReference>
<dbReference type="IntAct" id="Q12178">
    <property type="interactions" value="2"/>
</dbReference>
<dbReference type="MINT" id="Q12178"/>
<dbReference type="STRING" id="4932.YPR062W"/>
<dbReference type="iPTMnet" id="Q12178"/>
<dbReference type="PaxDb" id="4932-YPR062W"/>
<dbReference type="PeptideAtlas" id="Q12178"/>
<dbReference type="EnsemblFungi" id="YPR062W_mRNA">
    <property type="protein sequence ID" value="YPR062W"/>
    <property type="gene ID" value="YPR062W"/>
</dbReference>
<dbReference type="GeneID" id="856175"/>
<dbReference type="KEGG" id="sce:YPR062W"/>
<dbReference type="AGR" id="SGD:S000006266"/>
<dbReference type="SGD" id="S000006266">
    <property type="gene designation" value="FCY1"/>
</dbReference>
<dbReference type="VEuPathDB" id="FungiDB:YPR062W"/>
<dbReference type="eggNOG" id="KOG1018">
    <property type="taxonomic scope" value="Eukaryota"/>
</dbReference>
<dbReference type="HOGENOM" id="CLU_025810_7_2_1"/>
<dbReference type="InParanoid" id="Q12178"/>
<dbReference type="OMA" id="MCTGACL"/>
<dbReference type="OrthoDB" id="408702at2759"/>
<dbReference type="BioCyc" id="MetaCyc:YPR062W-MONOMER"/>
<dbReference type="BioCyc" id="YEAST:YPR062W-MONOMER"/>
<dbReference type="BRENDA" id="3.5.4.1">
    <property type="organism ID" value="984"/>
</dbReference>
<dbReference type="UniPathway" id="UPA00574">
    <property type="reaction ID" value="UER00635"/>
</dbReference>
<dbReference type="BioGRID-ORCS" id="856175">
    <property type="hits" value="1 hit in 10 CRISPR screens"/>
</dbReference>
<dbReference type="EvolutionaryTrace" id="Q12178"/>
<dbReference type="PRO" id="PR:Q12178"/>
<dbReference type="Proteomes" id="UP000002311">
    <property type="component" value="Chromosome XVI"/>
</dbReference>
<dbReference type="RNAct" id="Q12178">
    <property type="molecule type" value="protein"/>
</dbReference>
<dbReference type="GO" id="GO:0005737">
    <property type="term" value="C:cytoplasm"/>
    <property type="evidence" value="ECO:0007005"/>
    <property type="project" value="SGD"/>
</dbReference>
<dbReference type="GO" id="GO:0005634">
    <property type="term" value="C:nucleus"/>
    <property type="evidence" value="ECO:0007005"/>
    <property type="project" value="SGD"/>
</dbReference>
<dbReference type="GO" id="GO:0004131">
    <property type="term" value="F:cytosine deaminase activity"/>
    <property type="evidence" value="ECO:0000314"/>
    <property type="project" value="SGD"/>
</dbReference>
<dbReference type="GO" id="GO:0008835">
    <property type="term" value="F:diaminohydroxyphosphoribosylaminopyrimidine deaminase activity"/>
    <property type="evidence" value="ECO:0000318"/>
    <property type="project" value="GO_Central"/>
</dbReference>
<dbReference type="GO" id="GO:0008270">
    <property type="term" value="F:zinc ion binding"/>
    <property type="evidence" value="ECO:0007669"/>
    <property type="project" value="InterPro"/>
</dbReference>
<dbReference type="GO" id="GO:0046087">
    <property type="term" value="P:cytidine metabolic process"/>
    <property type="evidence" value="ECO:0000315"/>
    <property type="project" value="SGD"/>
</dbReference>
<dbReference type="GO" id="GO:0019858">
    <property type="term" value="P:cytosine metabolic process"/>
    <property type="evidence" value="ECO:0000315"/>
    <property type="project" value="SGD"/>
</dbReference>
<dbReference type="GO" id="GO:0008655">
    <property type="term" value="P:pyrimidine-containing compound salvage"/>
    <property type="evidence" value="ECO:0000315"/>
    <property type="project" value="SGD"/>
</dbReference>
<dbReference type="GO" id="GO:0044206">
    <property type="term" value="P:UMP salvage"/>
    <property type="evidence" value="ECO:0007669"/>
    <property type="project" value="UniProtKB-UniPathway"/>
</dbReference>
<dbReference type="CDD" id="cd00786">
    <property type="entry name" value="cytidine_deaminase-like"/>
    <property type="match status" value="1"/>
</dbReference>
<dbReference type="FunFam" id="3.40.140.10:FF:000016">
    <property type="entry name" value="Cytosine deaminase"/>
    <property type="match status" value="1"/>
</dbReference>
<dbReference type="Gene3D" id="3.40.140.10">
    <property type="entry name" value="Cytidine Deaminase, domain 2"/>
    <property type="match status" value="1"/>
</dbReference>
<dbReference type="InterPro" id="IPR016192">
    <property type="entry name" value="APOBEC/CMP_deaminase_Zn-bd"/>
</dbReference>
<dbReference type="InterPro" id="IPR002125">
    <property type="entry name" value="CMP_dCMP_dom"/>
</dbReference>
<dbReference type="InterPro" id="IPR016193">
    <property type="entry name" value="Cytidine_deaminase-like"/>
</dbReference>
<dbReference type="PANTHER" id="PTHR11079:SF190">
    <property type="entry name" value="CYTOSINE DEAMINASE"/>
    <property type="match status" value="1"/>
</dbReference>
<dbReference type="PANTHER" id="PTHR11079">
    <property type="entry name" value="CYTOSINE DEAMINASE FAMILY MEMBER"/>
    <property type="match status" value="1"/>
</dbReference>
<dbReference type="Pfam" id="PF00383">
    <property type="entry name" value="dCMP_cyt_deam_1"/>
    <property type="match status" value="1"/>
</dbReference>
<dbReference type="SUPFAM" id="SSF53927">
    <property type="entry name" value="Cytidine deaminase-like"/>
    <property type="match status" value="1"/>
</dbReference>
<dbReference type="PROSITE" id="PS00903">
    <property type="entry name" value="CYT_DCMP_DEAMINASES_1"/>
    <property type="match status" value="1"/>
</dbReference>
<dbReference type="PROSITE" id="PS51747">
    <property type="entry name" value="CYT_DCMP_DEAMINASES_2"/>
    <property type="match status" value="1"/>
</dbReference>
<comment type="function">
    <text evidence="2 9">Catalyzes the hydrolytic deamination of cytosine to uracil or 5-methylcytosine to thymine. Is involved in the pyrimidine salvage pathway, which allows the cell to utilize cytosine for pyrimidine nucleotide synthesis.</text>
</comment>
<comment type="catalytic activity">
    <reaction evidence="9">
        <text>cytosine + H2O + H(+) = uracil + NH4(+)</text>
        <dbReference type="Rhea" id="RHEA:20605"/>
        <dbReference type="ChEBI" id="CHEBI:15377"/>
        <dbReference type="ChEBI" id="CHEBI:15378"/>
        <dbReference type="ChEBI" id="CHEBI:16040"/>
        <dbReference type="ChEBI" id="CHEBI:17568"/>
        <dbReference type="ChEBI" id="CHEBI:28938"/>
        <dbReference type="EC" id="3.5.4.1"/>
    </reaction>
</comment>
<comment type="cofactor">
    <cofactor evidence="3 4 8">
        <name>Zn(2+)</name>
        <dbReference type="ChEBI" id="CHEBI:29105"/>
    </cofactor>
</comment>
<comment type="biophysicochemical properties">
    <kinetics>
        <KM evidence="7">1.1 mM for cytosine</KM>
        <KM evidence="7">0.16 mM for 5-fluorocytosine</KM>
        <text evidence="7">kcat is 91 sec(-1) with cytosine as substrate and 17 sec(-1) with 5-fluorocytosine as substrate.</text>
    </kinetics>
</comment>
<comment type="pathway">
    <text evidence="2 12">Pyrimidine metabolism; UMP biosynthesis via salvage pathway; uracil from cytosine: step 1/1.</text>
</comment>
<comment type="subunit">
    <text evidence="4">Homodimer.</text>
</comment>
<comment type="subcellular location">
    <subcellularLocation>
        <location evidence="5">Cytoplasm</location>
    </subcellularLocation>
    <subcellularLocation>
        <location evidence="5">Nucleus</location>
    </subcellularLocation>
</comment>
<comment type="biotechnology">
    <text evidence="13">Also catalyzes the conversion of 5-fluorocytosine (5FC) to 5-fluorouracil (5FU); this activity allows the formation of a cytotoxic chemotherapeutic agent from a non-cytotoxic precursor. yCD/5FC is one of the most widely used enzyme/prodrug combinations for gene-directed enzyme prodrug therapy (GDEPT) for the treatment of cancers. 5FU is an anticancer drug used to treat breast, colon, rectal, stomach, and pancreatic cancers, and is the drug of choice for treating colorectal carcinoma. However, the drug has high gastrointestinal and hematological toxicities. In contrast, the prodrug 5FC is fairly non-toxic to human, because of the lack of CD activity in human cells. By producing 5FU in the tumor, the CD/5FC system minimizes the undesired toxic effects of 5FU.</text>
</comment>
<comment type="miscellaneous">
    <text evidence="6">Present with 5180 molecules/cell in log phase SD medium.</text>
</comment>
<comment type="similarity">
    <text evidence="11">Belongs to the cytidine and deoxycytidylate deaminase family.</text>
</comment>
<sequence length="158" mass="17507">MVTGGMASKWDQKGMDIAYEEAALGYKEGGVPIGGCLINNKDGSVLGRGHNMRFQKGSATLHGEISTLENCGRLEGKVYKDTTLYTTLSPCDMCTGAIIMYGIPRCVVGENVNFKSKGEKYLQTRGHEVVVVDDERCKKIMKQFIDERPQDWFEDIGE</sequence>